<protein>
    <recommendedName>
        <fullName>Cuticle protein 79, isoform A</fullName>
    </recommendedName>
    <alternativeName>
        <fullName>LM-ACP 79A</fullName>
        <shortName>LM-79A</shortName>
    </alternativeName>
</protein>
<reference key="1">
    <citation type="journal article" date="1995" name="Insect Biochem. Mol. Biol.">
        <title>Primary structure of proteins from the wing cuticle of the migratory locust, Locusta migratoria.</title>
        <authorList>
            <person name="Krogh T.N."/>
            <person name="Skou L."/>
            <person name="Roepstorff P."/>
            <person name="Andersen S.O."/>
            <person name="Hoejrup P."/>
        </authorList>
    </citation>
    <scope>PROTEIN SEQUENCE</scope>
    <scope>MASS SPECTROMETRY</scope>
    <source>
        <tissue>Wing</tissue>
    </source>
</reference>
<keyword id="KW-0193">Cuticle</keyword>
<keyword id="KW-0903">Direct protein sequencing</keyword>
<keyword id="KW-0677">Repeat</keyword>
<evidence type="ECO:0000269" key="1">
    <source>
    </source>
</evidence>
<sequence>GFLGGGYGGGLGLGGYGGGYGLGGGLGGGLGGIGLAAAPAVGIAAAPAIGIAAAPATLVRTRVVPGPARLVQPPPVVQKQVIQPPPIVQTRLIQPPAQLVQGPPQVIHEQTPALIKTAVPAPSFGYKSLLH</sequence>
<comment type="function">
    <text>Component of the cuticle of migratory locust which contains more than 100 different structural proteins.</text>
</comment>
<comment type="domain">
    <text>The tetrapeptide (A-A-P-[AV]) repeats found throughout the protein are also present in many proteins constituting the protective envelope of other species.</text>
</comment>
<comment type="mass spectrometry"/>
<name>CU79A_LOCMI</name>
<accession>P45586</accession>
<organism>
    <name type="scientific">Locusta migratoria</name>
    <name type="common">Migratory locust</name>
    <dbReference type="NCBI Taxonomy" id="7004"/>
    <lineage>
        <taxon>Eukaryota</taxon>
        <taxon>Metazoa</taxon>
        <taxon>Ecdysozoa</taxon>
        <taxon>Arthropoda</taxon>
        <taxon>Hexapoda</taxon>
        <taxon>Insecta</taxon>
        <taxon>Pterygota</taxon>
        <taxon>Neoptera</taxon>
        <taxon>Polyneoptera</taxon>
        <taxon>Orthoptera</taxon>
        <taxon>Caelifera</taxon>
        <taxon>Acrididea</taxon>
        <taxon>Acridomorpha</taxon>
        <taxon>Acridoidea</taxon>
        <taxon>Acrididae</taxon>
        <taxon>Oedipodinae</taxon>
        <taxon>Locusta</taxon>
    </lineage>
</organism>
<dbReference type="GO" id="GO:0042302">
    <property type="term" value="F:structural constituent of cuticle"/>
    <property type="evidence" value="ECO:0007669"/>
    <property type="project" value="UniProtKB-KW"/>
</dbReference>
<feature type="chain" id="PRO_0000196114" description="Cuticle protein 79, isoform A">
    <location>
        <begin position="1"/>
        <end position="131"/>
    </location>
</feature>
<feature type="repeat" description="1">
    <location>
        <begin position="37"/>
        <end position="40"/>
    </location>
</feature>
<feature type="repeat" description="2">
    <location>
        <begin position="45"/>
        <end position="48"/>
    </location>
</feature>
<feature type="repeat" description="3">
    <location>
        <begin position="53"/>
        <end position="56"/>
    </location>
</feature>
<proteinExistence type="evidence at protein level"/>